<feature type="chain" id="PRO_1000062972" description="Thiosulfate sulfurtransferase GlpE">
    <location>
        <begin position="1"/>
        <end position="110"/>
    </location>
</feature>
<feature type="domain" description="Rhodanese" evidence="1">
    <location>
        <begin position="17"/>
        <end position="105"/>
    </location>
</feature>
<feature type="active site" description="Cysteine persulfide intermediate" evidence="1">
    <location>
        <position position="65"/>
    </location>
</feature>
<gene>
    <name evidence="1" type="primary">glpE</name>
    <name type="ordered locus">Pput_0432</name>
</gene>
<organism>
    <name type="scientific">Pseudomonas putida (strain ATCC 700007 / DSM 6899 / JCM 31910 / BCRC 17059 / LMG 24140 / F1)</name>
    <dbReference type="NCBI Taxonomy" id="351746"/>
    <lineage>
        <taxon>Bacteria</taxon>
        <taxon>Pseudomonadati</taxon>
        <taxon>Pseudomonadota</taxon>
        <taxon>Gammaproteobacteria</taxon>
        <taxon>Pseudomonadales</taxon>
        <taxon>Pseudomonadaceae</taxon>
        <taxon>Pseudomonas</taxon>
    </lineage>
</organism>
<keyword id="KW-0963">Cytoplasm</keyword>
<keyword id="KW-0808">Transferase</keyword>
<comment type="function">
    <text evidence="1">Transferase that catalyzes the transfer of sulfur from thiosulfate to thiophilic acceptors such as cyanide or dithiols. May function in a CysM-independent thiosulfate assimilation pathway by catalyzing the conversion of thiosulfate to sulfite, which can then be used for L-cysteine biosynthesis.</text>
</comment>
<comment type="catalytic activity">
    <reaction evidence="1">
        <text>thiosulfate + hydrogen cyanide = thiocyanate + sulfite + 2 H(+)</text>
        <dbReference type="Rhea" id="RHEA:16881"/>
        <dbReference type="ChEBI" id="CHEBI:15378"/>
        <dbReference type="ChEBI" id="CHEBI:17359"/>
        <dbReference type="ChEBI" id="CHEBI:18022"/>
        <dbReference type="ChEBI" id="CHEBI:18407"/>
        <dbReference type="ChEBI" id="CHEBI:33542"/>
        <dbReference type="EC" id="2.8.1.1"/>
    </reaction>
</comment>
<comment type="catalytic activity">
    <reaction evidence="1">
        <text>thiosulfate + [thioredoxin]-dithiol = [thioredoxin]-disulfide + hydrogen sulfide + sulfite + 2 H(+)</text>
        <dbReference type="Rhea" id="RHEA:83859"/>
        <dbReference type="Rhea" id="RHEA-COMP:10698"/>
        <dbReference type="Rhea" id="RHEA-COMP:10700"/>
        <dbReference type="ChEBI" id="CHEBI:15378"/>
        <dbReference type="ChEBI" id="CHEBI:17359"/>
        <dbReference type="ChEBI" id="CHEBI:29919"/>
        <dbReference type="ChEBI" id="CHEBI:29950"/>
        <dbReference type="ChEBI" id="CHEBI:33542"/>
        <dbReference type="ChEBI" id="CHEBI:50058"/>
    </reaction>
</comment>
<comment type="subcellular location">
    <subcellularLocation>
        <location evidence="1">Cytoplasm</location>
    </subcellularLocation>
</comment>
<comment type="similarity">
    <text evidence="1">Belongs to the GlpE family.</text>
</comment>
<protein>
    <recommendedName>
        <fullName evidence="1">Thiosulfate sulfurtransferase GlpE</fullName>
        <ecNumber evidence="1">2.8.1.1</ecNumber>
    </recommendedName>
</protein>
<dbReference type="EC" id="2.8.1.1" evidence="1"/>
<dbReference type="EMBL" id="CP000712">
    <property type="protein sequence ID" value="ABQ76602.1"/>
    <property type="molecule type" value="Genomic_DNA"/>
</dbReference>
<dbReference type="SMR" id="A5VXJ2"/>
<dbReference type="KEGG" id="ppf:Pput_0432"/>
<dbReference type="eggNOG" id="COG0607">
    <property type="taxonomic scope" value="Bacteria"/>
</dbReference>
<dbReference type="HOGENOM" id="CLU_089574_14_0_6"/>
<dbReference type="GO" id="GO:0005737">
    <property type="term" value="C:cytoplasm"/>
    <property type="evidence" value="ECO:0007669"/>
    <property type="project" value="UniProtKB-SubCell"/>
</dbReference>
<dbReference type="GO" id="GO:0004792">
    <property type="term" value="F:thiosulfate-cyanide sulfurtransferase activity"/>
    <property type="evidence" value="ECO:0007669"/>
    <property type="project" value="UniProtKB-UniRule"/>
</dbReference>
<dbReference type="GO" id="GO:0006071">
    <property type="term" value="P:glycerol metabolic process"/>
    <property type="evidence" value="ECO:0007669"/>
    <property type="project" value="UniProtKB-UniRule"/>
</dbReference>
<dbReference type="CDD" id="cd01444">
    <property type="entry name" value="GlpE_ST"/>
    <property type="match status" value="1"/>
</dbReference>
<dbReference type="Gene3D" id="3.40.250.10">
    <property type="entry name" value="Rhodanese-like domain"/>
    <property type="match status" value="1"/>
</dbReference>
<dbReference type="HAMAP" id="MF_01009">
    <property type="entry name" value="Thiosulf_sulfurtr"/>
    <property type="match status" value="1"/>
</dbReference>
<dbReference type="InterPro" id="IPR050229">
    <property type="entry name" value="GlpE_sulfurtransferase"/>
</dbReference>
<dbReference type="InterPro" id="IPR001763">
    <property type="entry name" value="Rhodanese-like_dom"/>
</dbReference>
<dbReference type="InterPro" id="IPR036873">
    <property type="entry name" value="Rhodanese-like_dom_sf"/>
</dbReference>
<dbReference type="InterPro" id="IPR023695">
    <property type="entry name" value="Thiosulf_sulfurTrfase"/>
</dbReference>
<dbReference type="NCBIfam" id="NF001195">
    <property type="entry name" value="PRK00162.1"/>
    <property type="match status" value="1"/>
</dbReference>
<dbReference type="PANTHER" id="PTHR43031">
    <property type="entry name" value="FAD-DEPENDENT OXIDOREDUCTASE"/>
    <property type="match status" value="1"/>
</dbReference>
<dbReference type="PANTHER" id="PTHR43031:SF6">
    <property type="entry name" value="THIOSULFATE SULFURTRANSFERASE GLPE"/>
    <property type="match status" value="1"/>
</dbReference>
<dbReference type="Pfam" id="PF00581">
    <property type="entry name" value="Rhodanese"/>
    <property type="match status" value="1"/>
</dbReference>
<dbReference type="SMART" id="SM00450">
    <property type="entry name" value="RHOD"/>
    <property type="match status" value="1"/>
</dbReference>
<dbReference type="SUPFAM" id="SSF52821">
    <property type="entry name" value="Rhodanese/Cell cycle control phosphatase"/>
    <property type="match status" value="1"/>
</dbReference>
<dbReference type="PROSITE" id="PS50206">
    <property type="entry name" value="RHODANESE_3"/>
    <property type="match status" value="1"/>
</dbReference>
<evidence type="ECO:0000255" key="1">
    <source>
        <dbReference type="HAMAP-Rule" id="MF_01009"/>
    </source>
</evidence>
<reference key="1">
    <citation type="submission" date="2007-05" db="EMBL/GenBank/DDBJ databases">
        <title>Complete sequence of Pseudomonas putida F1.</title>
        <authorList>
            <consortium name="US DOE Joint Genome Institute"/>
            <person name="Copeland A."/>
            <person name="Lucas S."/>
            <person name="Lapidus A."/>
            <person name="Barry K."/>
            <person name="Detter J.C."/>
            <person name="Glavina del Rio T."/>
            <person name="Hammon N."/>
            <person name="Israni S."/>
            <person name="Dalin E."/>
            <person name="Tice H."/>
            <person name="Pitluck S."/>
            <person name="Chain P."/>
            <person name="Malfatti S."/>
            <person name="Shin M."/>
            <person name="Vergez L."/>
            <person name="Schmutz J."/>
            <person name="Larimer F."/>
            <person name="Land M."/>
            <person name="Hauser L."/>
            <person name="Kyrpides N."/>
            <person name="Lykidis A."/>
            <person name="Parales R."/>
            <person name="Richardson P."/>
        </authorList>
    </citation>
    <scope>NUCLEOTIDE SEQUENCE [LARGE SCALE GENOMIC DNA]</scope>
    <source>
        <strain>ATCC 700007 / DSM 6899 / JCM 31910 / BCRC 17059 / LMG 24140 / F1</strain>
    </source>
</reference>
<accession>A5VXJ2</accession>
<name>GLPE_PSEP1</name>
<sequence length="110" mass="11906">MSEFKRIPPEQALELRKKEGAVVVDIRDPQAFAAGHITGARHLDNHSVADFIRNADLDAPTLVVCYHGNSSQSAAAYLVGQGFSDVYSVDGGFELWRATYPAETAQGNAE</sequence>
<proteinExistence type="inferred from homology"/>